<evidence type="ECO:0000255" key="1">
    <source>
        <dbReference type="HAMAP-Rule" id="MF_01876"/>
    </source>
</evidence>
<reference key="1">
    <citation type="submission" date="2007-04" db="EMBL/GenBank/DDBJ databases">
        <title>Complete sequence of Roseiflexus sp. RS-1.</title>
        <authorList>
            <consortium name="US DOE Joint Genome Institute"/>
            <person name="Copeland A."/>
            <person name="Lucas S."/>
            <person name="Lapidus A."/>
            <person name="Barry K."/>
            <person name="Detter J.C."/>
            <person name="Glavina del Rio T."/>
            <person name="Hammon N."/>
            <person name="Israni S."/>
            <person name="Dalin E."/>
            <person name="Tice H."/>
            <person name="Pitluck S."/>
            <person name="Chertkov O."/>
            <person name="Brettin T."/>
            <person name="Bruce D."/>
            <person name="Han C."/>
            <person name="Schmutz J."/>
            <person name="Larimer F."/>
            <person name="Land M."/>
            <person name="Hauser L."/>
            <person name="Kyrpides N."/>
            <person name="Mikhailova N."/>
            <person name="Bryant D.A."/>
            <person name="Richardson P."/>
        </authorList>
    </citation>
    <scope>NUCLEOTIDE SEQUENCE [LARGE SCALE GENOMIC DNA]</scope>
    <source>
        <strain>RS-1</strain>
    </source>
</reference>
<accession>A5UT22</accession>
<comment type="function">
    <text evidence="1">Catalyzes the reversible cleavage of pseudouridine 5'-phosphate (PsiMP) to ribose 5-phosphate and uracil. Functions biologically in the cleavage direction, as part of a pseudouridine degradation pathway.</text>
</comment>
<comment type="catalytic activity">
    <reaction evidence="1">
        <text>D-ribose 5-phosphate + uracil = psi-UMP + H2O</text>
        <dbReference type="Rhea" id="RHEA:18337"/>
        <dbReference type="ChEBI" id="CHEBI:15377"/>
        <dbReference type="ChEBI" id="CHEBI:17568"/>
        <dbReference type="ChEBI" id="CHEBI:58380"/>
        <dbReference type="ChEBI" id="CHEBI:78346"/>
        <dbReference type="EC" id="4.2.1.70"/>
    </reaction>
</comment>
<comment type="cofactor">
    <cofactor evidence="1">
        <name>Mn(2+)</name>
        <dbReference type="ChEBI" id="CHEBI:29035"/>
    </cofactor>
    <text evidence="1">Binds 1 Mn(2+) ion per subunit.</text>
</comment>
<comment type="subunit">
    <text evidence="1">Homotrimer.</text>
</comment>
<comment type="similarity">
    <text evidence="1">Belongs to the pseudouridine-5'-phosphate glycosidase family.</text>
</comment>
<proteinExistence type="inferred from homology"/>
<dbReference type="EC" id="4.2.1.70" evidence="1"/>
<dbReference type="EMBL" id="CP000686">
    <property type="protein sequence ID" value="ABQ89775.1"/>
    <property type="molecule type" value="Genomic_DNA"/>
</dbReference>
<dbReference type="RefSeq" id="WP_011956127.1">
    <property type="nucleotide sequence ID" value="NC_009523.1"/>
</dbReference>
<dbReference type="SMR" id="A5UT22"/>
<dbReference type="STRING" id="357808.RoseRS_1375"/>
<dbReference type="KEGG" id="rrs:RoseRS_1375"/>
<dbReference type="eggNOG" id="COG2313">
    <property type="taxonomic scope" value="Bacteria"/>
</dbReference>
<dbReference type="HOGENOM" id="CLU_012201_0_1_0"/>
<dbReference type="OrthoDB" id="9805870at2"/>
<dbReference type="Proteomes" id="UP000006554">
    <property type="component" value="Chromosome"/>
</dbReference>
<dbReference type="GO" id="GO:0005737">
    <property type="term" value="C:cytoplasm"/>
    <property type="evidence" value="ECO:0007669"/>
    <property type="project" value="TreeGrafter"/>
</dbReference>
<dbReference type="GO" id="GO:0016798">
    <property type="term" value="F:hydrolase activity, acting on glycosyl bonds"/>
    <property type="evidence" value="ECO:0007669"/>
    <property type="project" value="UniProtKB-KW"/>
</dbReference>
<dbReference type="GO" id="GO:0046872">
    <property type="term" value="F:metal ion binding"/>
    <property type="evidence" value="ECO:0007669"/>
    <property type="project" value="UniProtKB-KW"/>
</dbReference>
<dbReference type="GO" id="GO:0004730">
    <property type="term" value="F:pseudouridylate synthase activity"/>
    <property type="evidence" value="ECO:0007669"/>
    <property type="project" value="UniProtKB-UniRule"/>
</dbReference>
<dbReference type="GO" id="GO:0046113">
    <property type="term" value="P:nucleobase catabolic process"/>
    <property type="evidence" value="ECO:0007669"/>
    <property type="project" value="UniProtKB-UniRule"/>
</dbReference>
<dbReference type="Gene3D" id="3.40.1790.10">
    <property type="entry name" value="Indigoidine synthase domain"/>
    <property type="match status" value="1"/>
</dbReference>
<dbReference type="HAMAP" id="MF_01876">
    <property type="entry name" value="PsiMP_glycosidase"/>
    <property type="match status" value="1"/>
</dbReference>
<dbReference type="InterPro" id="IPR022830">
    <property type="entry name" value="Indigdn_synthA-like"/>
</dbReference>
<dbReference type="InterPro" id="IPR007342">
    <property type="entry name" value="PsuG"/>
</dbReference>
<dbReference type="PANTHER" id="PTHR42909:SF1">
    <property type="entry name" value="CARBOHYDRATE KINASE PFKB DOMAIN-CONTAINING PROTEIN"/>
    <property type="match status" value="1"/>
</dbReference>
<dbReference type="PANTHER" id="PTHR42909">
    <property type="entry name" value="ZGC:136858"/>
    <property type="match status" value="1"/>
</dbReference>
<dbReference type="Pfam" id="PF04227">
    <property type="entry name" value="Indigoidine_A"/>
    <property type="match status" value="1"/>
</dbReference>
<dbReference type="SUPFAM" id="SSF110581">
    <property type="entry name" value="Indigoidine synthase A-like"/>
    <property type="match status" value="1"/>
</dbReference>
<name>PSUG_ROSS1</name>
<gene>
    <name evidence="1" type="primary">psuG</name>
    <name type="ordered locus">RoseRS_1375</name>
</gene>
<keyword id="KW-0326">Glycosidase</keyword>
<keyword id="KW-0378">Hydrolase</keyword>
<keyword id="KW-0456">Lyase</keyword>
<keyword id="KW-0464">Manganese</keyword>
<keyword id="KW-0479">Metal-binding</keyword>
<sequence length="311" mass="32109">MTLEHDRKGISIAVSAEVQAALDAGQPVVALESTVISHGLPYPHNLELALAMEQEVRDQGAVPATVGIVAGVPTVGMDAAAIRRFAHPDPHHPPLKVSRRDIGYVVAAGGDGATTVAATMALAHLAGVQVFATGGIGGVHRGARETWDVSADLTELERTPVLVVCAGAKAILDLPATLEYLETGGVPVLGWRTAEFPAFYSVSSGLPVAYAQDASFVARAWKAHRALGGAGMVLAVPPPVEDAIDRAVVEAAIERALNRAVKEGVHGPAVTPFLLAALARETEGESVRANVALLRQNARIAAQVATAIAGI</sequence>
<organism>
    <name type="scientific">Roseiflexus sp. (strain RS-1)</name>
    <dbReference type="NCBI Taxonomy" id="357808"/>
    <lineage>
        <taxon>Bacteria</taxon>
        <taxon>Bacillati</taxon>
        <taxon>Chloroflexota</taxon>
        <taxon>Chloroflexia</taxon>
        <taxon>Chloroflexales</taxon>
        <taxon>Roseiflexineae</taxon>
        <taxon>Roseiflexaceae</taxon>
        <taxon>Roseiflexus</taxon>
    </lineage>
</organism>
<protein>
    <recommendedName>
        <fullName evidence="1">Pseudouridine-5'-phosphate glycosidase</fullName>
        <shortName evidence="1">PsiMP glycosidase</shortName>
        <ecNumber evidence="1">4.2.1.70</ecNumber>
    </recommendedName>
</protein>
<feature type="chain" id="PRO_0000390543" description="Pseudouridine-5'-phosphate glycosidase">
    <location>
        <begin position="1"/>
        <end position="311"/>
    </location>
</feature>
<feature type="active site" description="Proton donor" evidence="1">
    <location>
        <position position="32"/>
    </location>
</feature>
<feature type="active site" description="Nucleophile" evidence="1">
    <location>
        <position position="169"/>
    </location>
</feature>
<feature type="binding site" evidence="1">
    <location>
        <position position="96"/>
    </location>
    <ligand>
        <name>substrate</name>
    </ligand>
</feature>
<feature type="binding site" evidence="1">
    <location>
        <position position="116"/>
    </location>
    <ligand>
        <name>substrate</name>
    </ligand>
</feature>
<feature type="binding site" evidence="1">
    <location>
        <position position="148"/>
    </location>
    <ligand>
        <name>Mn(2+)</name>
        <dbReference type="ChEBI" id="CHEBI:29035"/>
    </ligand>
</feature>
<feature type="binding site" evidence="1">
    <location>
        <begin position="150"/>
        <end position="152"/>
    </location>
    <ligand>
        <name>substrate</name>
    </ligand>
</feature>